<accession>O42636</accession>
<accession>Q7SE85</accession>
<feature type="transit peptide" description="Mitochondrion">
    <location>
        <begin position="1"/>
        <end position="8"/>
    </location>
</feature>
<feature type="chain" id="PRO_0000005468" description="Complex I intermediate-associated protein 30, mitochondrial">
    <location>
        <begin position="9"/>
        <end position="278"/>
    </location>
</feature>
<sequence>MRATQSLPFKSFWSRSLDELSRLTNIVVKSENIRGATGPREIHNFQTPESVADCKLLSDADVGGSSTAHLDWVPPPNAIPTVTAGDGSDRKPYTPIPGSYARFHGTISLELPTDRREISRTGYAGFRTLDRPPTIFGRGLWDIDPYAYLAMRVKTDARSYFVNVRTESVVPLDLHQHRLFVKKPGQWETVLIKWNDFVRTNHGKVIEPQTGMLRQKVLSIGFSTTDRKAGPYELCVERLWATNDFDEAGVVETDVAGAQLKNKHGEKVKVTWGALEQE</sequence>
<evidence type="ECO:0000269" key="1">
    <source>
    </source>
</evidence>
<evidence type="ECO:0000305" key="2"/>
<organism>
    <name type="scientific">Neurospora crassa (strain ATCC 24698 / 74-OR23-1A / CBS 708.71 / DSM 1257 / FGSC 987)</name>
    <dbReference type="NCBI Taxonomy" id="367110"/>
    <lineage>
        <taxon>Eukaryota</taxon>
        <taxon>Fungi</taxon>
        <taxon>Dikarya</taxon>
        <taxon>Ascomycota</taxon>
        <taxon>Pezizomycotina</taxon>
        <taxon>Sordariomycetes</taxon>
        <taxon>Sordariomycetidae</taxon>
        <taxon>Sordariales</taxon>
        <taxon>Sordariaceae</taxon>
        <taxon>Neurospora</taxon>
    </lineage>
</organism>
<protein>
    <recommendedName>
        <fullName>Complex I intermediate-associated protein 30, mitochondrial</fullName>
    </recommendedName>
</protein>
<dbReference type="EMBL" id="AJ001726">
    <property type="protein sequence ID" value="CAA04954.1"/>
    <property type="molecule type" value="Genomic_DNA"/>
</dbReference>
<dbReference type="EMBL" id="BX842630">
    <property type="protein sequence ID" value="CAE76376.1"/>
    <property type="molecule type" value="Genomic_DNA"/>
</dbReference>
<dbReference type="EMBL" id="CM002236">
    <property type="protein sequence ID" value="EAA35103.3"/>
    <property type="molecule type" value="Genomic_DNA"/>
</dbReference>
<dbReference type="PIR" id="T47247">
    <property type="entry name" value="T47247"/>
</dbReference>
<dbReference type="RefSeq" id="XP_964339.3">
    <property type="nucleotide sequence ID" value="XM_959246.3"/>
</dbReference>
<dbReference type="SMR" id="O42636"/>
<dbReference type="STRING" id="367110.O42636"/>
<dbReference type="EnsemblFungi" id="EAA35103">
    <property type="protein sequence ID" value="EAA35103"/>
    <property type="gene ID" value="NCU01975"/>
</dbReference>
<dbReference type="GeneID" id="3880479"/>
<dbReference type="KEGG" id="ncr:NCU01975"/>
<dbReference type="VEuPathDB" id="FungiDB:NCU01975"/>
<dbReference type="HOGENOM" id="CLU_059028_1_2_1"/>
<dbReference type="InParanoid" id="O42636"/>
<dbReference type="OrthoDB" id="42561at2759"/>
<dbReference type="Proteomes" id="UP000001805">
    <property type="component" value="Chromosome 1, Linkage Group I"/>
</dbReference>
<dbReference type="GO" id="GO:0005739">
    <property type="term" value="C:mitochondrion"/>
    <property type="evidence" value="ECO:0000318"/>
    <property type="project" value="GO_Central"/>
</dbReference>
<dbReference type="GO" id="GO:1990204">
    <property type="term" value="C:oxidoreductase complex"/>
    <property type="evidence" value="ECO:0000314"/>
    <property type="project" value="UniProtKB"/>
</dbReference>
<dbReference type="GO" id="GO:0051082">
    <property type="term" value="F:unfolded protein binding"/>
    <property type="evidence" value="ECO:0000314"/>
    <property type="project" value="UniProtKB"/>
</dbReference>
<dbReference type="GO" id="GO:0006120">
    <property type="term" value="P:mitochondrial electron transport, NADH to ubiquinone"/>
    <property type="evidence" value="ECO:0000314"/>
    <property type="project" value="UniProtKB"/>
</dbReference>
<dbReference type="GO" id="GO:0010257">
    <property type="term" value="P:NADH dehydrogenase complex assembly"/>
    <property type="evidence" value="ECO:0000318"/>
    <property type="project" value="GO_Central"/>
</dbReference>
<dbReference type="GO" id="GO:0065003">
    <property type="term" value="P:protein-containing complex assembly"/>
    <property type="evidence" value="ECO:0000303"/>
    <property type="project" value="UniProtKB"/>
</dbReference>
<dbReference type="InterPro" id="IPR008979">
    <property type="entry name" value="Galactose-bd-like_sf"/>
</dbReference>
<dbReference type="InterPro" id="IPR013857">
    <property type="entry name" value="NADH-UbQ_OxRdtase-assoc_prot30"/>
</dbReference>
<dbReference type="InterPro" id="IPR039131">
    <property type="entry name" value="NDUFAF1"/>
</dbReference>
<dbReference type="PANTHER" id="PTHR13194">
    <property type="entry name" value="COMPLEX I INTERMEDIATE-ASSOCIATED PROTEIN 30"/>
    <property type="match status" value="1"/>
</dbReference>
<dbReference type="PANTHER" id="PTHR13194:SF18">
    <property type="entry name" value="COMPLEX I INTERMEDIATE-ASSOCIATED PROTEIN 30, MITOCHONDRIAL"/>
    <property type="match status" value="1"/>
</dbReference>
<dbReference type="Pfam" id="PF08547">
    <property type="entry name" value="CIA30"/>
    <property type="match status" value="1"/>
</dbReference>
<dbReference type="SUPFAM" id="SSF49785">
    <property type="entry name" value="Galactose-binding domain-like"/>
    <property type="match status" value="1"/>
</dbReference>
<comment type="function">
    <text evidence="1">Chaperone protein involved in the assembly of the mitochondrial NADH:ubiquinone oxidoreductase complex (complex I).</text>
</comment>
<comment type="subcellular location">
    <subcellularLocation>
        <location evidence="1">Mitochondrion</location>
    </subcellularLocation>
</comment>
<comment type="similarity">
    <text evidence="2">Belongs to the CIA30 family.</text>
</comment>
<name>CIA30_NEUCR</name>
<proteinExistence type="evidence at protein level"/>
<keyword id="KW-0143">Chaperone</keyword>
<keyword id="KW-0903">Direct protein sequencing</keyword>
<keyword id="KW-0496">Mitochondrion</keyword>
<keyword id="KW-1185">Reference proteome</keyword>
<keyword id="KW-0809">Transit peptide</keyword>
<gene>
    <name type="primary">cia30</name>
    <name type="synonym">cia35</name>
    <name type="ORF">B13D15.210</name>
    <name type="ORF">NCU01975</name>
</gene>
<reference key="1">
    <citation type="journal article" date="1998" name="J. Mol. Biol.">
        <title>Involvement of two novel chaperones in the assembly of mitochondrial NADH:ubiquinone oxidoreductase (complex 1).</title>
        <authorList>
            <person name="Kueffner R."/>
            <person name="Rohr A."/>
            <person name="Schmiede A."/>
            <person name="Kruell C."/>
            <person name="Schulte U."/>
        </authorList>
    </citation>
    <scope>NUCLEOTIDE SEQUENCE [GENOMIC DNA]</scope>
    <scope>PARTIAL PROTEIN SEQUENCE</scope>
    <scope>FUNCTION</scope>
    <scope>SUBCELLULAR LOCATION</scope>
</reference>
<reference key="2">
    <citation type="journal article" date="2003" name="Nucleic Acids Res.">
        <title>What's in the genome of a filamentous fungus? Analysis of the Neurospora genome sequence.</title>
        <authorList>
            <person name="Mannhaupt G."/>
            <person name="Montrone C."/>
            <person name="Haase D."/>
            <person name="Mewes H.-W."/>
            <person name="Aign V."/>
            <person name="Hoheisel J.D."/>
            <person name="Fartmann B."/>
            <person name="Nyakatura G."/>
            <person name="Kempken F."/>
            <person name="Maier J."/>
            <person name="Schulte U."/>
        </authorList>
    </citation>
    <scope>NUCLEOTIDE SEQUENCE [LARGE SCALE GENOMIC DNA]</scope>
    <source>
        <strain>ATCC 24698 / 74-OR23-1A / CBS 708.71 / DSM 1257 / FGSC 987</strain>
    </source>
</reference>
<reference key="3">
    <citation type="journal article" date="2003" name="Nature">
        <title>The genome sequence of the filamentous fungus Neurospora crassa.</title>
        <authorList>
            <person name="Galagan J.E."/>
            <person name="Calvo S.E."/>
            <person name="Borkovich K.A."/>
            <person name="Selker E.U."/>
            <person name="Read N.D."/>
            <person name="Jaffe D.B."/>
            <person name="FitzHugh W."/>
            <person name="Ma L.-J."/>
            <person name="Smirnov S."/>
            <person name="Purcell S."/>
            <person name="Rehman B."/>
            <person name="Elkins T."/>
            <person name="Engels R."/>
            <person name="Wang S."/>
            <person name="Nielsen C.B."/>
            <person name="Butler J."/>
            <person name="Endrizzi M."/>
            <person name="Qui D."/>
            <person name="Ianakiev P."/>
            <person name="Bell-Pedersen D."/>
            <person name="Nelson M.A."/>
            <person name="Werner-Washburne M."/>
            <person name="Selitrennikoff C.P."/>
            <person name="Kinsey J.A."/>
            <person name="Braun E.L."/>
            <person name="Zelter A."/>
            <person name="Schulte U."/>
            <person name="Kothe G.O."/>
            <person name="Jedd G."/>
            <person name="Mewes H.-W."/>
            <person name="Staben C."/>
            <person name="Marcotte E."/>
            <person name="Greenberg D."/>
            <person name="Roy A."/>
            <person name="Foley K."/>
            <person name="Naylor J."/>
            <person name="Stange-Thomann N."/>
            <person name="Barrett R."/>
            <person name="Gnerre S."/>
            <person name="Kamal M."/>
            <person name="Kamvysselis M."/>
            <person name="Mauceli E.W."/>
            <person name="Bielke C."/>
            <person name="Rudd S."/>
            <person name="Frishman D."/>
            <person name="Krystofova S."/>
            <person name="Rasmussen C."/>
            <person name="Metzenberg R.L."/>
            <person name="Perkins D.D."/>
            <person name="Kroken S."/>
            <person name="Cogoni C."/>
            <person name="Macino G."/>
            <person name="Catcheside D.E.A."/>
            <person name="Li W."/>
            <person name="Pratt R.J."/>
            <person name="Osmani S.A."/>
            <person name="DeSouza C.P.C."/>
            <person name="Glass N.L."/>
            <person name="Orbach M.J."/>
            <person name="Berglund J.A."/>
            <person name="Voelker R."/>
            <person name="Yarden O."/>
            <person name="Plamann M."/>
            <person name="Seiler S."/>
            <person name="Dunlap J.C."/>
            <person name="Radford A."/>
            <person name="Aramayo R."/>
            <person name="Natvig D.O."/>
            <person name="Alex L.A."/>
            <person name="Mannhaupt G."/>
            <person name="Ebbole D.J."/>
            <person name="Freitag M."/>
            <person name="Paulsen I."/>
            <person name="Sachs M.S."/>
            <person name="Lander E.S."/>
            <person name="Nusbaum C."/>
            <person name="Birren B.W."/>
        </authorList>
    </citation>
    <scope>NUCLEOTIDE SEQUENCE [LARGE SCALE GENOMIC DNA]</scope>
    <source>
        <strain>ATCC 24698 / 74-OR23-1A / CBS 708.71 / DSM 1257 / FGSC 987</strain>
    </source>
</reference>